<accession>F8GVD3</accession>
<feature type="chain" id="PRO_0000452008" description="3-sulfinopropanoyl-CoA desulfinase">
    <location>
        <begin position="1"/>
        <end position="395"/>
    </location>
</feature>
<feature type="binding site" evidence="1">
    <location>
        <begin position="121"/>
        <end position="124"/>
    </location>
    <ligand>
        <name>FAD</name>
        <dbReference type="ChEBI" id="CHEBI:57692"/>
    </ligand>
</feature>
<feature type="binding site" evidence="1">
    <location>
        <position position="130"/>
    </location>
    <ligand>
        <name>FAD</name>
        <dbReference type="ChEBI" id="CHEBI:57692"/>
    </ligand>
</feature>
<feature type="binding site" evidence="1">
    <location>
        <begin position="153"/>
        <end position="156"/>
    </location>
    <ligand>
        <name>FAD</name>
        <dbReference type="ChEBI" id="CHEBI:57692"/>
    </ligand>
</feature>
<feature type="binding site" evidence="1">
    <location>
        <begin position="243"/>
        <end position="244"/>
    </location>
    <ligand>
        <name>substrate</name>
    </ligand>
</feature>
<feature type="binding site" evidence="1">
    <location>
        <position position="272"/>
    </location>
    <ligand>
        <name>FAD</name>
        <dbReference type="ChEBI" id="CHEBI:57692"/>
    </ligand>
</feature>
<feature type="binding site" evidence="1">
    <location>
        <position position="339"/>
    </location>
    <ligand>
        <name>FAD</name>
        <dbReference type="ChEBI" id="CHEBI:57692"/>
    </ligand>
</feature>
<feature type="binding site" evidence="1">
    <location>
        <position position="343"/>
    </location>
    <ligand>
        <name>FAD</name>
        <dbReference type="ChEBI" id="CHEBI:57692"/>
    </ligand>
</feature>
<feature type="binding site" evidence="1">
    <location>
        <begin position="366"/>
        <end position="370"/>
    </location>
    <ligand>
        <name>FAD</name>
        <dbReference type="ChEBI" id="CHEBI:57692"/>
    </ligand>
</feature>
<feature type="binding site" evidence="1">
    <location>
        <position position="387"/>
    </location>
    <ligand>
        <name>FAD</name>
        <dbReference type="ChEBI" id="CHEBI:57692"/>
    </ligand>
</feature>
<feature type="site" description="Important for activity" evidence="1">
    <location>
        <position position="84"/>
    </location>
</feature>
<protein>
    <recommendedName>
        <fullName evidence="4">3-sulfinopropanoyl-CoA desulfinase</fullName>
        <ecNumber evidence="2">3.13.1.4</ecNumber>
    </recommendedName>
    <alternativeName>
        <fullName evidence="3">3-sulfinopropionyl coenzyme A desulfinase</fullName>
        <shortName evidence="4">3-sulfinopropionyl-CoA desulfinase</shortName>
        <shortName evidence="3">3SP-CoA desulfinase</shortName>
    </alternativeName>
</protein>
<evidence type="ECO:0000250" key="1">
    <source>
        <dbReference type="UniProtKB" id="K4L7X3"/>
    </source>
</evidence>
<evidence type="ECO:0000269" key="2">
    <source>
    </source>
</evidence>
<evidence type="ECO:0000303" key="3">
    <source>
    </source>
</evidence>
<evidence type="ECO:0000305" key="4"/>
<evidence type="ECO:0000312" key="5">
    <source>
        <dbReference type="EMBL" id="AEI81492.1"/>
    </source>
</evidence>
<sequence>MYSLTNAQKDLQLKARDLAQCAFAPTAANTDVTEAYPWANVDRLLTEGFMGMTIPKEYGGQGRSYHDTVIVIEEMAKACATMGRITVEANMGAIGAIMNYGTEEQKKIAAAAVLSGDKPAICISEPNAGSAASEMTTRADRKGDRYILNGEKYWITGGGVSRLHLIFARVFDDGVDQGICAFICVREGNSPENLVVGRRLYAMGVRGIPETHLEFRDLQVHKSMLVVPPGGLKRGFASLMNAYNAQRVGAGTVALGIAQGAFEEAVTYAKERQQFGRPIAEFQGLQWMISDMSIQLEAARLLLHAAACSGESFPDIAMAARAKIFAAETANKVTNDSLQIYGSSGYGRHNPMERHVRDARMFTIAGGTAQILRTQVAGSILDMKLPQTRGGFLPK</sequence>
<geneLocation type="plasmid">
    <name>pBB1</name>
</geneLocation>
<reference key="1">
    <citation type="journal article" date="2011" name="J. Bacteriol.">
        <title>Complete genome sequence of the type strain Cupriavidus necator N-1.</title>
        <authorList>
            <person name="Poehlein A."/>
            <person name="Kusian B."/>
            <person name="Friedrich B."/>
            <person name="Daniel R."/>
            <person name="Bowien B."/>
        </authorList>
    </citation>
    <scope>NUCLEOTIDE SEQUENCE [LARGE SCALE GENOMIC DNA]</scope>
    <source>
        <strain>ATCC 43291 / DSM 13513 / CCUG 52238 / LMG 8453 / N-1</strain>
    </source>
</reference>
<reference key="2">
    <citation type="journal article" date="2014" name="J. Bacteriol.">
        <title>Identification of 3-sulfinopropionyl coenzyme A (CoA) desulfinases within the Acyl-CoA dehydrogenase superfamily.</title>
        <authorList>
            <person name="Schuermann M."/>
            <person name="Demming R.M."/>
            <person name="Krewing M."/>
            <person name="Rose J."/>
            <person name="Wuebbeler J.H."/>
            <person name="Steinbuechel A."/>
        </authorList>
    </citation>
    <scope>FUNCTION</scope>
    <scope>CATALYTIC ACTIVITY</scope>
    <scope>COFACTOR</scope>
    <scope>BIOPHYSICOCHEMICAL PROPERTIES</scope>
    <scope>SUBUNIT</scope>
    <source>
        <strain>ATCC 43291 / DSM 13513 / CCUG 52238 / LMG 8453 / N-1</strain>
    </source>
</reference>
<gene>
    <name evidence="3" type="primary">acd</name>
    <name evidence="5" type="synonym">bcd</name>
    <name evidence="5" type="ordered locus">CNE_BB1p00600</name>
</gene>
<organism>
    <name type="scientific">Cupriavidus necator (strain ATCC 43291 / DSM 13513 / CCUG 52238 / LMG 8453 / N-1)</name>
    <name type="common">Ralstonia eutropha</name>
    <dbReference type="NCBI Taxonomy" id="1042878"/>
    <lineage>
        <taxon>Bacteria</taxon>
        <taxon>Pseudomonadati</taxon>
        <taxon>Pseudomonadota</taxon>
        <taxon>Betaproteobacteria</taxon>
        <taxon>Burkholderiales</taxon>
        <taxon>Burkholderiaceae</taxon>
        <taxon>Cupriavidus</taxon>
    </lineage>
</organism>
<comment type="function">
    <text evidence="2">Catalyzes the conversion 3-sulfinopropanoyl-CoA (3SP-CoA) to propanoyl-CoA by abstraction of sulfite. Does not show dehydrogenase activity.</text>
</comment>
<comment type="catalytic activity">
    <reaction evidence="2">
        <text>3-sulfinopropanoyl-CoA + H2O = propanoyl-CoA + sulfite + H(+)</text>
        <dbReference type="Rhea" id="RHEA:41624"/>
        <dbReference type="ChEBI" id="CHEBI:15377"/>
        <dbReference type="ChEBI" id="CHEBI:15378"/>
        <dbReference type="ChEBI" id="CHEBI:17359"/>
        <dbReference type="ChEBI" id="CHEBI:57392"/>
        <dbReference type="ChEBI" id="CHEBI:78349"/>
        <dbReference type="EC" id="3.13.1.4"/>
    </reaction>
    <physiologicalReaction direction="left-to-right" evidence="2">
        <dbReference type="Rhea" id="RHEA:41625"/>
    </physiologicalReaction>
</comment>
<comment type="cofactor">
    <cofactor evidence="2">
        <name>FAD</name>
        <dbReference type="ChEBI" id="CHEBI:57692"/>
    </cofactor>
    <text evidence="1">Binds 1 FAD per subunit.</text>
</comment>
<comment type="biophysicochemical properties">
    <kinetics>
        <KM evidence="2">0.078 mM for 3SP-CoA</KM>
        <Vmax evidence="2">6.1 umol/min/mg enzyme</Vmax>
        <text evidence="2">kcat is 4.4 sec(-1).</text>
    </kinetics>
</comment>
<comment type="subunit">
    <text evidence="2">Homotrimer or homotetramer.</text>
</comment>
<comment type="similarity">
    <text evidence="4">Belongs to the acyl-CoA dehydrogenase family.</text>
</comment>
<keyword id="KW-0274">FAD</keyword>
<keyword id="KW-0285">Flavoprotein</keyword>
<keyword id="KW-0378">Hydrolase</keyword>
<keyword id="KW-0614">Plasmid</keyword>
<dbReference type="EC" id="3.13.1.4" evidence="2"/>
<dbReference type="EMBL" id="CP002879">
    <property type="protein sequence ID" value="AEI81492.1"/>
    <property type="molecule type" value="Genomic_DNA"/>
</dbReference>
<dbReference type="RefSeq" id="WP_013958551.1">
    <property type="nucleotide sequence ID" value="NC_015727.1"/>
</dbReference>
<dbReference type="SMR" id="F8GVD3"/>
<dbReference type="GeneID" id="34312824"/>
<dbReference type="KEGG" id="cnc:CNE_BB1p00600"/>
<dbReference type="HOGENOM" id="CLU_018204_0_2_4"/>
<dbReference type="Proteomes" id="UP000006798">
    <property type="component" value="Plasmid pBB1"/>
</dbReference>
<dbReference type="GO" id="GO:0003995">
    <property type="term" value="F:acyl-CoA dehydrogenase activity"/>
    <property type="evidence" value="ECO:0007669"/>
    <property type="project" value="TreeGrafter"/>
</dbReference>
<dbReference type="GO" id="GO:0050660">
    <property type="term" value="F:flavin adenine dinucleotide binding"/>
    <property type="evidence" value="ECO:0007669"/>
    <property type="project" value="InterPro"/>
</dbReference>
<dbReference type="GO" id="GO:0016787">
    <property type="term" value="F:hydrolase activity"/>
    <property type="evidence" value="ECO:0007669"/>
    <property type="project" value="UniProtKB-KW"/>
</dbReference>
<dbReference type="FunFam" id="1.20.140.10:FF:000004">
    <property type="entry name" value="Acyl-CoA dehydrogenase FadE25"/>
    <property type="match status" value="1"/>
</dbReference>
<dbReference type="Gene3D" id="1.10.540.10">
    <property type="entry name" value="Acyl-CoA dehydrogenase/oxidase, N-terminal domain"/>
    <property type="match status" value="1"/>
</dbReference>
<dbReference type="Gene3D" id="2.40.110.10">
    <property type="entry name" value="Butyryl-CoA Dehydrogenase, subunit A, domain 2"/>
    <property type="match status" value="1"/>
</dbReference>
<dbReference type="Gene3D" id="1.20.140.10">
    <property type="entry name" value="Butyryl-CoA Dehydrogenase, subunit A, domain 3"/>
    <property type="match status" value="1"/>
</dbReference>
<dbReference type="InterPro" id="IPR050032">
    <property type="entry name" value="AcdA"/>
</dbReference>
<dbReference type="InterPro" id="IPR006091">
    <property type="entry name" value="Acyl-CoA_Oxase/DH_mid-dom"/>
</dbReference>
<dbReference type="InterPro" id="IPR046373">
    <property type="entry name" value="Acyl-CoA_Oxase/DH_mid-dom_sf"/>
</dbReference>
<dbReference type="InterPro" id="IPR036250">
    <property type="entry name" value="AcylCo_DH-like_C"/>
</dbReference>
<dbReference type="InterPro" id="IPR009075">
    <property type="entry name" value="AcylCo_DH/oxidase_C"/>
</dbReference>
<dbReference type="InterPro" id="IPR013786">
    <property type="entry name" value="AcylCoA_DH/ox_N"/>
</dbReference>
<dbReference type="InterPro" id="IPR037069">
    <property type="entry name" value="AcylCoA_DH/ox_N_sf"/>
</dbReference>
<dbReference type="InterPro" id="IPR009100">
    <property type="entry name" value="AcylCoA_DH/oxidase_NM_dom_sf"/>
</dbReference>
<dbReference type="NCBIfam" id="NF042439">
    <property type="entry name" value="SulpropCoADesulf"/>
    <property type="match status" value="1"/>
</dbReference>
<dbReference type="PANTHER" id="PTHR43884">
    <property type="entry name" value="ACYL-COA DEHYDROGENASE"/>
    <property type="match status" value="1"/>
</dbReference>
<dbReference type="PANTHER" id="PTHR43884:SF12">
    <property type="entry name" value="ISOVALERYL-COA DEHYDROGENASE, MITOCHONDRIAL-RELATED"/>
    <property type="match status" value="1"/>
</dbReference>
<dbReference type="Pfam" id="PF00441">
    <property type="entry name" value="Acyl-CoA_dh_1"/>
    <property type="match status" value="1"/>
</dbReference>
<dbReference type="Pfam" id="PF02770">
    <property type="entry name" value="Acyl-CoA_dh_M"/>
    <property type="match status" value="1"/>
</dbReference>
<dbReference type="Pfam" id="PF02771">
    <property type="entry name" value="Acyl-CoA_dh_N"/>
    <property type="match status" value="1"/>
</dbReference>
<dbReference type="PIRSF" id="PIRSF016578">
    <property type="entry name" value="HsaA"/>
    <property type="match status" value="1"/>
</dbReference>
<dbReference type="SUPFAM" id="SSF47203">
    <property type="entry name" value="Acyl-CoA dehydrogenase C-terminal domain-like"/>
    <property type="match status" value="1"/>
</dbReference>
<dbReference type="SUPFAM" id="SSF56645">
    <property type="entry name" value="Acyl-CoA dehydrogenase NM domain-like"/>
    <property type="match status" value="1"/>
</dbReference>
<name>SPCAD_CUPNN</name>
<proteinExistence type="evidence at protein level"/>